<accession>Q9XW17</accession>
<reference evidence="11" key="1">
    <citation type="journal article" date="1998" name="Science">
        <title>Genome sequence of the nematode C. elegans: a platform for investigating biology.</title>
        <authorList>
            <consortium name="The C. elegans sequencing consortium"/>
        </authorList>
    </citation>
    <scope>NUCLEOTIDE SEQUENCE [LARGE SCALE GENOMIC DNA]</scope>
    <source>
        <strain evidence="11">Bristol N2</strain>
    </source>
</reference>
<reference evidence="9" key="2">
    <citation type="journal article" date="2008" name="Dev. Biol.">
        <title>Involvement of HMG-12 and CAR-1 in the cdc-48.1 expression of Caenorhabditis elegans.</title>
        <authorList>
            <person name="Yamauchi S."/>
            <person name="Higashitani N."/>
            <person name="Otani M."/>
            <person name="Higashitani A."/>
            <person name="Ogura T."/>
            <person name="Yamanaka K."/>
        </authorList>
    </citation>
    <scope>FUNCTION</scope>
    <scope>SUBCELLULAR LOCATION</scope>
    <scope>DISRUPTION PHENOTYPE</scope>
    <scope>IDENTIFICATION BY MASS SPECTROMETRY</scope>
</reference>
<reference evidence="13" key="3">
    <citation type="journal article" date="2018" name="EMBO J.">
        <title>Molecular architecture of LSM14 interactions involved in the assembly of mRNA silencing complexes.</title>
        <authorList>
            <person name="Brandmann T."/>
            <person name="Fakim H."/>
            <person name="Padamsi Z."/>
            <person name="Youn J.Y."/>
            <person name="Gingras A.C."/>
            <person name="Fabian M.R."/>
            <person name="Jinek M."/>
        </authorList>
    </citation>
    <scope>X-RAY CRYSTALLOGRAPHY (3.03 ANGSTROMS) OF 184-268 IN COMPLEX WITH HUMAN DDX6</scope>
    <scope>FUNCTION</scope>
</reference>
<sequence>MSNQTPYIGSKISLISKLDIRYEGILYTVDTNDSTIALAKVRSFGTEKRPTANPVAARDDVYEYIIFKASDIKDLIVCDTPKMANIGGGLPYDPAIISVSSRSAPASDGAPAASAGSSRAGTPSRNSPLGQIIQNQRPGRGGYQQNFQANRGYNNYRGGFAGGYNNQRGHNNYGVPRVNHREKLKFESDFDFEKANEKFQEVLVDNLEKLNIEDKAEPEVEEKKDAAFYDKKTSFFDNISCESLEKAEGKTGRPDWKKERETNQETFGHNAVRSLNYRRGFGGRGRGGNRGYGGYNNGYQHQHQHRGGYNGGYRQNNGGYRRGGYAPRDNQGNTAAAAEQ</sequence>
<keyword id="KW-0002">3D-structure</keyword>
<keyword id="KW-0507">mRNA processing</keyword>
<keyword id="KW-0508">mRNA splicing</keyword>
<keyword id="KW-0539">Nucleus</keyword>
<keyword id="KW-1185">Reference proteome</keyword>
<keyword id="KW-0694">RNA-binding</keyword>
<keyword id="KW-0747">Spliceosome</keyword>
<keyword id="KW-0804">Transcription</keyword>
<keyword id="KW-0805">Transcription regulation</keyword>
<evidence type="ECO:0000255" key="1">
    <source>
        <dbReference type="PROSITE-ProRule" id="PRU00845"/>
    </source>
</evidence>
<evidence type="ECO:0000255" key="2">
    <source>
        <dbReference type="PROSITE-ProRule" id="PRU00846"/>
    </source>
</evidence>
<evidence type="ECO:0000255" key="3">
    <source>
        <dbReference type="PROSITE-ProRule" id="PRU00869"/>
    </source>
</evidence>
<evidence type="ECO:0000255" key="4">
    <source>
        <dbReference type="PROSITE-ProRule" id="PRU01346"/>
    </source>
</evidence>
<evidence type="ECO:0000256" key="5">
    <source>
        <dbReference type="SAM" id="MobiDB-lite"/>
    </source>
</evidence>
<evidence type="ECO:0000269" key="6">
    <source>
    </source>
</evidence>
<evidence type="ECO:0000269" key="7">
    <source>
    </source>
</evidence>
<evidence type="ECO:0000303" key="8">
    <source>
    </source>
</evidence>
<evidence type="ECO:0000305" key="9"/>
<evidence type="ECO:0000305" key="10">
    <source>
    </source>
</evidence>
<evidence type="ECO:0000312" key="11">
    <source>
        <dbReference type="Proteomes" id="UP000001940"/>
    </source>
</evidence>
<evidence type="ECO:0000312" key="12">
    <source>
        <dbReference type="WormBase" id="Y18D10A.17"/>
    </source>
</evidence>
<evidence type="ECO:0007744" key="13">
    <source>
        <dbReference type="PDB" id="6F9S"/>
    </source>
</evidence>
<evidence type="ECO:0007829" key="14">
    <source>
        <dbReference type="PDB" id="6F9S"/>
    </source>
</evidence>
<dbReference type="EMBL" id="BX284601">
    <property type="protein sequence ID" value="CAA22317.1"/>
    <property type="molecule type" value="Genomic_DNA"/>
</dbReference>
<dbReference type="PIR" id="T26526">
    <property type="entry name" value="T26526"/>
</dbReference>
<dbReference type="RefSeq" id="NP_493254.1">
    <property type="nucleotide sequence ID" value="NM_060853.7"/>
</dbReference>
<dbReference type="PDB" id="6F9S">
    <property type="method" value="X-ray"/>
    <property type="resolution" value="3.03 A"/>
    <property type="chains" value="B=184-268"/>
</dbReference>
<dbReference type="PDBsum" id="6F9S"/>
<dbReference type="SMR" id="Q9XW17"/>
<dbReference type="DIP" id="DIP-26312N"/>
<dbReference type="FunCoup" id="Q9XW17">
    <property type="interactions" value="3293"/>
</dbReference>
<dbReference type="IntAct" id="Q9XW17">
    <property type="interactions" value="2"/>
</dbReference>
<dbReference type="STRING" id="6239.Y18D10A.17.1"/>
<dbReference type="PaxDb" id="6239-Y18D10A.17"/>
<dbReference type="PeptideAtlas" id="Q9XW17"/>
<dbReference type="DNASU" id="173158"/>
<dbReference type="EnsemblMetazoa" id="Y18D10A.17.1">
    <property type="protein sequence ID" value="Y18D10A.17.1"/>
    <property type="gene ID" value="WBGene00012484"/>
</dbReference>
<dbReference type="GeneID" id="173158"/>
<dbReference type="KEGG" id="cel:CELE_Y18D10A.17"/>
<dbReference type="UCSC" id="Y18D10A.17">
    <property type="organism name" value="c. elegans"/>
</dbReference>
<dbReference type="AGR" id="WB:WBGene00012484"/>
<dbReference type="CTD" id="173158"/>
<dbReference type="WormBase" id="Y18D10A.17">
    <property type="protein sequence ID" value="CE21413"/>
    <property type="gene ID" value="WBGene00012484"/>
    <property type="gene designation" value="car-1"/>
</dbReference>
<dbReference type="eggNOG" id="KOG1073">
    <property type="taxonomic scope" value="Eukaryota"/>
</dbReference>
<dbReference type="GeneTree" id="ENSGT00940000168901"/>
<dbReference type="HOGENOM" id="CLU_019221_2_0_1"/>
<dbReference type="InParanoid" id="Q9XW17"/>
<dbReference type="OMA" id="EQFSDMF"/>
<dbReference type="OrthoDB" id="21539at2759"/>
<dbReference type="PhylomeDB" id="Q9XW17"/>
<dbReference type="CD-CODE" id="73A75392">
    <property type="entry name" value="P-granule"/>
</dbReference>
<dbReference type="CD-CODE" id="D6EADA8A">
    <property type="entry name" value="RNP granule"/>
</dbReference>
<dbReference type="CD-CODE" id="EE0382A7">
    <property type="entry name" value="P-body"/>
</dbReference>
<dbReference type="PRO" id="PR:Q9XW17"/>
<dbReference type="Proteomes" id="UP000001940">
    <property type="component" value="Chromosome I"/>
</dbReference>
<dbReference type="Bgee" id="WBGene00012484">
    <property type="expression patterns" value="Expressed in adult organism and 9 other cell types or tissues"/>
</dbReference>
<dbReference type="GO" id="GO:0005737">
    <property type="term" value="C:cytoplasm"/>
    <property type="evidence" value="ECO:0000314"/>
    <property type="project" value="WormBase"/>
</dbReference>
<dbReference type="GO" id="GO:0005783">
    <property type="term" value="C:endoplasmic reticulum"/>
    <property type="evidence" value="ECO:0000314"/>
    <property type="project" value="WormBase"/>
</dbReference>
<dbReference type="GO" id="GO:0072686">
    <property type="term" value="C:mitotic spindle"/>
    <property type="evidence" value="ECO:0000314"/>
    <property type="project" value="WormBase"/>
</dbReference>
<dbReference type="GO" id="GO:1990023">
    <property type="term" value="C:mitotic spindle midzone"/>
    <property type="evidence" value="ECO:0000314"/>
    <property type="project" value="WormBase"/>
</dbReference>
<dbReference type="GO" id="GO:0043186">
    <property type="term" value="C:P granule"/>
    <property type="evidence" value="ECO:0000314"/>
    <property type="project" value="WormBase"/>
</dbReference>
<dbReference type="GO" id="GO:0000932">
    <property type="term" value="C:P-body"/>
    <property type="evidence" value="ECO:0000314"/>
    <property type="project" value="WormBase"/>
</dbReference>
<dbReference type="GO" id="GO:0000242">
    <property type="term" value="C:pericentriolar material"/>
    <property type="evidence" value="ECO:0000314"/>
    <property type="project" value="WormBase"/>
</dbReference>
<dbReference type="GO" id="GO:1990904">
    <property type="term" value="C:ribonucleoprotein complex"/>
    <property type="evidence" value="ECO:0000314"/>
    <property type="project" value="WormBase"/>
</dbReference>
<dbReference type="GO" id="GO:0035770">
    <property type="term" value="C:ribonucleoprotein granule"/>
    <property type="evidence" value="ECO:0000314"/>
    <property type="project" value="WormBase"/>
</dbReference>
<dbReference type="GO" id="GO:0005681">
    <property type="term" value="C:spliceosomal complex"/>
    <property type="evidence" value="ECO:0007669"/>
    <property type="project" value="UniProtKB-KW"/>
</dbReference>
<dbReference type="GO" id="GO:0003729">
    <property type="term" value="F:mRNA binding"/>
    <property type="evidence" value="ECO:0000318"/>
    <property type="project" value="GO_Central"/>
</dbReference>
<dbReference type="GO" id="GO:0000979">
    <property type="term" value="F:RNA polymerase II core promoter sequence-specific DNA binding"/>
    <property type="evidence" value="ECO:0000314"/>
    <property type="project" value="UniProtKB"/>
</dbReference>
<dbReference type="GO" id="GO:0006397">
    <property type="term" value="P:mRNA processing"/>
    <property type="evidence" value="ECO:0007669"/>
    <property type="project" value="UniProtKB-KW"/>
</dbReference>
<dbReference type="GO" id="GO:0033962">
    <property type="term" value="P:P-body assembly"/>
    <property type="evidence" value="ECO:0000318"/>
    <property type="project" value="GO_Central"/>
</dbReference>
<dbReference type="GO" id="GO:0010628">
    <property type="term" value="P:positive regulation of gene expression"/>
    <property type="evidence" value="ECO:0000315"/>
    <property type="project" value="UniProtKB"/>
</dbReference>
<dbReference type="GO" id="GO:0008380">
    <property type="term" value="P:RNA splicing"/>
    <property type="evidence" value="ECO:0007669"/>
    <property type="project" value="UniProtKB-KW"/>
</dbReference>
<dbReference type="GO" id="GO:0034063">
    <property type="term" value="P:stress granule assembly"/>
    <property type="evidence" value="ECO:0000318"/>
    <property type="project" value="GO_Central"/>
</dbReference>
<dbReference type="CDD" id="cd01736">
    <property type="entry name" value="LSm14_N"/>
    <property type="match status" value="1"/>
</dbReference>
<dbReference type="Gene3D" id="2.30.30.100">
    <property type="match status" value="1"/>
</dbReference>
<dbReference type="InterPro" id="IPR025762">
    <property type="entry name" value="DFDF"/>
</dbReference>
<dbReference type="InterPro" id="IPR019050">
    <property type="entry name" value="FDF_dom"/>
</dbReference>
<dbReference type="InterPro" id="IPR025761">
    <property type="entry name" value="FFD_box"/>
</dbReference>
<dbReference type="InterPro" id="IPR025609">
    <property type="entry name" value="Lsm14-like_N"/>
</dbReference>
<dbReference type="InterPro" id="IPR010920">
    <property type="entry name" value="LSM_dom_sf"/>
</dbReference>
<dbReference type="InterPro" id="IPR047575">
    <property type="entry name" value="Sm"/>
</dbReference>
<dbReference type="InterPro" id="IPR025768">
    <property type="entry name" value="TFG_box"/>
</dbReference>
<dbReference type="PANTHER" id="PTHR13586">
    <property type="entry name" value="SCD6 PROTEIN-RELATED"/>
    <property type="match status" value="1"/>
</dbReference>
<dbReference type="PANTHER" id="PTHR13586:SF0">
    <property type="entry name" value="TRAILER HITCH, ISOFORM H"/>
    <property type="match status" value="1"/>
</dbReference>
<dbReference type="Pfam" id="PF09532">
    <property type="entry name" value="FDF"/>
    <property type="match status" value="1"/>
</dbReference>
<dbReference type="Pfam" id="PF12701">
    <property type="entry name" value="LSM14"/>
    <property type="match status" value="1"/>
</dbReference>
<dbReference type="SMART" id="SM01199">
    <property type="entry name" value="FDF"/>
    <property type="match status" value="1"/>
</dbReference>
<dbReference type="SMART" id="SM01271">
    <property type="entry name" value="LSM14"/>
    <property type="match status" value="1"/>
</dbReference>
<dbReference type="SUPFAM" id="SSF50182">
    <property type="entry name" value="Sm-like ribonucleoproteins"/>
    <property type="match status" value="1"/>
</dbReference>
<dbReference type="PROSITE" id="PS51512">
    <property type="entry name" value="DFDF"/>
    <property type="match status" value="1"/>
</dbReference>
<dbReference type="PROSITE" id="PS51513">
    <property type="entry name" value="FFD"/>
    <property type="match status" value="1"/>
</dbReference>
<dbReference type="PROSITE" id="PS52002">
    <property type="entry name" value="SM"/>
    <property type="match status" value="1"/>
</dbReference>
<dbReference type="PROSITE" id="PS51536">
    <property type="entry name" value="TFG"/>
    <property type="match status" value="1"/>
</dbReference>
<feature type="chain" id="PRO_0000456798" description="Protein LSM14 homolog car-1">
    <location>
        <begin position="1"/>
        <end position="340"/>
    </location>
</feature>
<feature type="domain" description="Sm" evidence="4">
    <location>
        <begin position="1"/>
        <end position="81"/>
    </location>
</feature>
<feature type="domain" description="DFDF" evidence="1">
    <location>
        <begin position="178"/>
        <end position="214"/>
    </location>
</feature>
<feature type="region of interest" description="Disordered" evidence="5">
    <location>
        <begin position="101"/>
        <end position="148"/>
    </location>
</feature>
<feature type="region of interest" description="Disordered" evidence="5">
    <location>
        <begin position="277"/>
        <end position="340"/>
    </location>
</feature>
<feature type="short sequence motif" description="FFD box" evidence="2">
    <location>
        <begin position="227"/>
        <end position="243"/>
    </location>
</feature>
<feature type="short sequence motif" description="TFG box" evidence="3">
    <location>
        <begin position="251"/>
        <end position="271"/>
    </location>
</feature>
<feature type="compositionally biased region" description="Low complexity" evidence="5">
    <location>
        <begin position="101"/>
        <end position="125"/>
    </location>
</feature>
<feature type="compositionally biased region" description="Polar residues" evidence="5">
    <location>
        <begin position="126"/>
        <end position="148"/>
    </location>
</feature>
<feature type="compositionally biased region" description="Gly residues" evidence="5">
    <location>
        <begin position="280"/>
        <end position="296"/>
    </location>
</feature>
<feature type="compositionally biased region" description="Low complexity" evidence="5">
    <location>
        <begin position="312"/>
        <end position="325"/>
    </location>
</feature>
<feature type="helix" evidence="14">
    <location>
        <begin position="192"/>
        <end position="207"/>
    </location>
</feature>
<feature type="helix" evidence="14">
    <location>
        <begin position="256"/>
        <end position="267"/>
    </location>
</feature>
<name>LS14H_CAEEL</name>
<proteinExistence type="evidence at protein level"/>
<gene>
    <name evidence="12" type="primary">car-1</name>
    <name evidence="12" type="ORF">Y18D10A.17</name>
</gene>
<comment type="function">
    <text evidence="6 7">Transcriptional regulator (PubMed:18430416). Involved in modulating embryonic expression of ATP-dependent chaperone cdc-48.1 (PubMed:18430416). May play a role in mRNA gene silencing, and RNA granule (P-body) assembly (PubMed:29510985).</text>
</comment>
<comment type="subcellular location">
    <subcellularLocation>
        <location evidence="10">Nucleus</location>
    </subcellularLocation>
</comment>
<comment type="disruption phenotype">
    <text evidence="6">RNAi-mediated knockdown significantly reduces protein levels of ATP-dependent chaperones cdc-48.1 and cdc-48.2 in embryos.</text>
</comment>
<comment type="similarity">
    <text evidence="9">Belongs to the LSM14 family.</text>
</comment>
<organism evidence="11">
    <name type="scientific">Caenorhabditis elegans</name>
    <dbReference type="NCBI Taxonomy" id="6239"/>
    <lineage>
        <taxon>Eukaryota</taxon>
        <taxon>Metazoa</taxon>
        <taxon>Ecdysozoa</taxon>
        <taxon>Nematoda</taxon>
        <taxon>Chromadorea</taxon>
        <taxon>Rhabditida</taxon>
        <taxon>Rhabditina</taxon>
        <taxon>Rhabditomorpha</taxon>
        <taxon>Rhabditoidea</taxon>
        <taxon>Rhabditidae</taxon>
        <taxon>Peloderinae</taxon>
        <taxon>Caenorhabditis</taxon>
    </lineage>
</organism>
<protein>
    <recommendedName>
        <fullName evidence="8">Protein LSM14 homolog car-1</fullName>
    </recommendedName>
    <alternativeName>
        <fullName evidence="12">Cytokinesis, apoptosis, RNA-associated protein car-1</fullName>
    </alternativeName>
</protein>